<keyword id="KW-0025">Alternative splicing</keyword>
<keyword id="KW-0963">Cytoplasm</keyword>
<keyword id="KW-1185">Reference proteome</keyword>
<keyword id="KW-0943">RNA-mediated gene silencing</keyword>
<protein>
    <recommendedName>
        <fullName evidence="7">P-granule-associated protein deps-1</fullName>
    </recommendedName>
    <alternativeName>
        <fullName evidence="9">Defective P granules and sterile protein deps-1</fullName>
    </alternativeName>
</protein>
<dbReference type="EMBL" id="BX284601">
    <property type="protein sequence ID" value="CCD73489.1"/>
    <property type="molecule type" value="Genomic_DNA"/>
</dbReference>
<dbReference type="EMBL" id="BX284601">
    <property type="protein sequence ID" value="CDK13412.1"/>
    <property type="molecule type" value="Genomic_DNA"/>
</dbReference>
<dbReference type="RefSeq" id="NP_001293193.1">
    <molecule id="Q9N303-2"/>
    <property type="nucleotide sequence ID" value="NM_001306264.3"/>
</dbReference>
<dbReference type="RefSeq" id="NP_490742.1">
    <molecule id="Q9N303-1"/>
    <property type="nucleotide sequence ID" value="NM_058341.6"/>
</dbReference>
<dbReference type="FunCoup" id="Q9N303">
    <property type="interactions" value="774"/>
</dbReference>
<dbReference type="STRING" id="6239.Y65B4BL.2a.1"/>
<dbReference type="PaxDb" id="6239-Y65B4BL.2"/>
<dbReference type="PeptideAtlas" id="Q9N303"/>
<dbReference type="EnsemblMetazoa" id="Y65B4BL.2a.1">
    <molecule id="Q9N303-1"/>
    <property type="protein sequence ID" value="Y65B4BL.2a.1"/>
    <property type="gene ID" value="WBGene00022034"/>
</dbReference>
<dbReference type="EnsemblMetazoa" id="Y65B4BL.2b.1">
    <molecule id="Q9N303-2"/>
    <property type="protein sequence ID" value="Y65B4BL.2b.1"/>
    <property type="gene ID" value="WBGene00022034"/>
</dbReference>
<dbReference type="GeneID" id="171642"/>
<dbReference type="KEGG" id="cel:CELE_Y65B4BL.2"/>
<dbReference type="UCSC" id="Y65B4BL.2">
    <molecule id="Q9N303-1"/>
    <property type="organism name" value="c. elegans"/>
</dbReference>
<dbReference type="AGR" id="WB:WBGene00022034"/>
<dbReference type="CTD" id="171642"/>
<dbReference type="WormBase" id="Y65B4BL.2a">
    <molecule id="Q9N303-1"/>
    <property type="protein sequence ID" value="CE25536"/>
    <property type="gene ID" value="WBGene00022034"/>
    <property type="gene designation" value="deps-1"/>
</dbReference>
<dbReference type="WormBase" id="Y65B4BL.2b">
    <molecule id="Q9N303-2"/>
    <property type="protein sequence ID" value="CE49430"/>
    <property type="gene ID" value="WBGene00022034"/>
    <property type="gene designation" value="deps-1"/>
</dbReference>
<dbReference type="eggNOG" id="ENOG502S2C2">
    <property type="taxonomic scope" value="Eukaryota"/>
</dbReference>
<dbReference type="HOGENOM" id="CLU_410628_0_0_1"/>
<dbReference type="InParanoid" id="Q9N303"/>
<dbReference type="OMA" id="AWIRIET"/>
<dbReference type="OrthoDB" id="5799162at2759"/>
<dbReference type="CD-CODE" id="73A75392">
    <property type="entry name" value="P-granule"/>
</dbReference>
<dbReference type="PRO" id="PR:Q9N303"/>
<dbReference type="Proteomes" id="UP000001940">
    <property type="component" value="Chromosome I"/>
</dbReference>
<dbReference type="Bgee" id="WBGene00022034">
    <property type="expression patterns" value="Expressed in germ line (C elegans) and 4 other cell types or tissues"/>
</dbReference>
<dbReference type="ExpressionAtlas" id="Q9N303">
    <property type="expression patterns" value="baseline"/>
</dbReference>
<dbReference type="GO" id="GO:0043186">
    <property type="term" value="C:P granule"/>
    <property type="evidence" value="ECO:0000314"/>
    <property type="project" value="WormBase"/>
</dbReference>
<dbReference type="GO" id="GO:0048471">
    <property type="term" value="C:perinuclear region of cytoplasm"/>
    <property type="evidence" value="ECO:0007669"/>
    <property type="project" value="UniProtKB-SubCell"/>
</dbReference>
<dbReference type="GO" id="GO:0031047">
    <property type="term" value="P:regulatory ncRNA-mediated gene silencing"/>
    <property type="evidence" value="ECO:0007669"/>
    <property type="project" value="UniProtKB-KW"/>
</dbReference>
<dbReference type="InterPro" id="IPR057139">
    <property type="entry name" value="OB_DEPS-1_1st"/>
</dbReference>
<dbReference type="InterPro" id="IPR057143">
    <property type="entry name" value="OB_DEPS-1_2nd"/>
</dbReference>
<dbReference type="InterPro" id="IPR057144">
    <property type="entry name" value="OB_DEPS-1_6th"/>
</dbReference>
<dbReference type="Pfam" id="PF24343">
    <property type="entry name" value="OB_DEPS-1_1st"/>
    <property type="match status" value="1"/>
</dbReference>
<dbReference type="Pfam" id="PF24342">
    <property type="entry name" value="OB_DEPS-1_2nd"/>
    <property type="match status" value="1"/>
</dbReference>
<dbReference type="Pfam" id="PF24339">
    <property type="entry name" value="OB_DEPS-1_3rd"/>
    <property type="match status" value="1"/>
</dbReference>
<dbReference type="Pfam" id="PF24341">
    <property type="entry name" value="OB_DEPS-1_6th"/>
    <property type="match status" value="1"/>
</dbReference>
<gene>
    <name evidence="6 9" type="primary">deps-1</name>
    <name evidence="9" type="ORF">Y65B4BL.2</name>
</gene>
<name>DEPS1_CAEEL</name>
<sequence>MSERQSKYFDYQGIVISSTGQDNQDSETDLVYLIQAHGKAAPKNIMYGVSKCAFVPTNLERNFDNIEEAKNLERRSKIPLKFGEVILWNESDCDHDKRIILHIKREKPIYEASSSRNGLILKVGGVIQPTSTTSFWTPLCTVTMPETEATRAEPDVWLYAWIRFETTMKSGLDPFNMTATFESFDSCDPSDQARVCEAPWNAGSPDSKFGVWRPDPKPADSDDEIDIEPREGWHLPEDKWAEVIKMQLGLYVGERLLICKELSQFDFIIPLQKPFSRGTDKTLIYPAVGEYFHFSAIWSMQHNGFLIYELQPVPLLRQHVTSVNGNLLTRVVPASIRGLFVDKEGTLGLIDDPHHLLSFFEFHPAGYEFLKAMAEVRAVRTSENKSVRYRIVRTSGMSIFENWLRDTQFVVGPVKGIRINEDTVICAKHPNVYFKIPNNLKEGIPIGGGVQFVGKRQAGVDSEIMITECSPCPAFTCKNYSVSGDTRLFQVYLKPNCDHEQLAESDSMGFVDFRELETPCRGKFLAWVRESITVNDCRRAATIMEVCSTAICPPLIAMSANSSRATSARTTPAGSSIGSRSSIQSRASAATSVSSNRFVGPSSRRTPSGTPQSSTSSRV</sequence>
<comment type="function">
    <text evidence="2 3 4 5">Component of P-granules which is required for P-granule formation and integrity in adult germ cells (PubMed:18234720). Promotes the accumulation of glh-1 mRNA and localization of pgl-1 to P-granules (PubMed:18234720). Involved in RNA-mediated gene silencing (RNAi) in the germline (PubMed:18234720, PubMed:32843637). In particular, it is required for piwi-interacting RNA (piRNA) gene silencing and positively regulates the formation of secondary 22G-RNAs, which are RNA-dependent RNA polymerase-derived endo-siRNAs, typically 22 nucleotides in length with a 5'guanosine residue (PubMed:32843637). Its role in RNAi may also be through positively regulating the expression of the dsRNA-binding protein rde-4 (PubMed:18234720). Plays a role in small RNA-directed transgenerational epigenetic inheritance (PubMed:27015309, PubMed:29769721).</text>
</comment>
<comment type="subunit">
    <text evidence="5">Interacts (via N-terminus) with prg-1; the interaction is direct (PubMed:32843637). May interact with edg-1 (PubMed:32843637).</text>
</comment>
<comment type="subcellular location">
    <subcellularLocation>
        <location evidence="2 5">Cytoplasmic granule</location>
    </subcellularLocation>
    <subcellularLocation>
        <location evidence="5">Cytoplasm</location>
        <location evidence="5">Perinuclear region</location>
    </subcellularLocation>
    <text evidence="2 5">Localizes to P-granules in germ cells at all stages of development (PubMed:18234720). Co-localizes with prg-1 at peri-nuclear P-granules in the proliferative zone and transition zone, at pachytene, in oocytes and in embryos (PubMed:32843637). In the distal loop, a higher proportion of deps-1 than prg-1 dissociates from the perinuclear region (PubMed:32843637). In the adult germline, co-localizes with znfx-1 at P-granules and with pgl-1 at P-granules in the pachytene region (PubMed:32843637).</text>
</comment>
<comment type="alternative products">
    <event type="alternative splicing"/>
    <isoform>
        <id>Q9N303-1</id>
        <name evidence="9">a</name>
        <sequence type="displayed"/>
    </isoform>
    <isoform>
        <id>Q9N303-2</id>
        <name evidence="10">b</name>
        <sequence type="described" ref="VSP_060860"/>
    </isoform>
</comment>
<comment type="tissue specificity">
    <text evidence="2">Expressed in germ cells.</text>
</comment>
<comment type="developmental stage">
    <text evidence="2">Expressed at all stages of development from embryogenesis to adulthood (PubMed:18234720). Expressed at all embryonic stages (PubMed:18234720).</text>
</comment>
<comment type="disruption phenotype">
    <text evidence="2">RNAi-mediated knockdown results in sterility and disrupts the localization of pgl-1 to P-granules at 24.5 degrees Celsius.</text>
</comment>
<organism evidence="8">
    <name type="scientific">Caenorhabditis elegans</name>
    <dbReference type="NCBI Taxonomy" id="6239"/>
    <lineage>
        <taxon>Eukaryota</taxon>
        <taxon>Metazoa</taxon>
        <taxon>Ecdysozoa</taxon>
        <taxon>Nematoda</taxon>
        <taxon>Chromadorea</taxon>
        <taxon>Rhabditida</taxon>
        <taxon>Rhabditina</taxon>
        <taxon>Rhabditomorpha</taxon>
        <taxon>Rhabditoidea</taxon>
        <taxon>Rhabditidae</taxon>
        <taxon>Peloderinae</taxon>
        <taxon>Caenorhabditis</taxon>
    </lineage>
</organism>
<accession>Q9N303</accession>
<accession>V6CLC9</accession>
<proteinExistence type="evidence at protein level"/>
<reference evidence="8" key="1">
    <citation type="journal article" date="1998" name="Science">
        <title>Genome sequence of the nematode C. elegans: a platform for investigating biology.</title>
        <authorList>
            <consortium name="The C. elegans sequencing consortium"/>
        </authorList>
    </citation>
    <scope>NUCLEOTIDE SEQUENCE [LARGE SCALE GENOMIC DNA]</scope>
    <source>
        <strain evidence="8">Bristol N2</strain>
    </source>
</reference>
<reference evidence="7" key="2">
    <citation type="journal article" date="2008" name="Development">
        <title>DEPS-1 promotes P-granule assembly and RNA interference in C. elegans germ cells.</title>
        <authorList>
            <person name="Spike C.A."/>
            <person name="Bader J."/>
            <person name="Reinke V."/>
            <person name="Strome S."/>
        </authorList>
    </citation>
    <scope>FUNCTION</scope>
    <scope>SUBCELLULAR LOCATION</scope>
    <scope>TISSUE SPECIFICITY</scope>
    <scope>DEVELOPMENTAL STAGE</scope>
    <scope>DISRUPTION PHENOTYPE</scope>
    <scope>MUTAGENESIS OF 116-ARG--VAL-619 AND 408-GLN--VAL-619</scope>
</reference>
<reference evidence="7" key="3">
    <citation type="journal article" date="2016" name="Cell">
        <title>A Tunable Mechanism Determines the Duration of the Transgenerational Small RNA Inheritance in C. elegans.</title>
        <authorList>
            <person name="Houri-Ze'evi L."/>
            <person name="Korem Y."/>
            <person name="Sheftel H."/>
            <person name="Faigenbloom L."/>
            <person name="Toker I.A."/>
            <person name="Dagan Y."/>
            <person name="Awad L."/>
            <person name="Degani L."/>
            <person name="Alon U."/>
            <person name="Rechavi O."/>
        </authorList>
    </citation>
    <scope>FUNCTION</scope>
</reference>
<reference evidence="7" key="4">
    <citation type="journal article" date="2018" name="Nature">
        <title>Spatiotemporal regulation of liquid-like condensates in epigenetic inheritance.</title>
        <authorList>
            <person name="Wan G."/>
            <person name="Fields B.D."/>
            <person name="Spracklin G."/>
            <person name="Shukla A."/>
            <person name="Phillips C.M."/>
            <person name="Kennedy S."/>
        </authorList>
    </citation>
    <scope>FUNCTION</scope>
    <scope>MUTAGENESIS OF 116-ARG--VAL-619</scope>
</reference>
<reference evidence="7" key="5">
    <citation type="journal article" date="2020" name="Nat. Commun.">
        <title>DEPS-1 is required for piRNA-dependent silencing and PIWI condensate organisation in Caenorhabditis elegans.</title>
        <authorList>
            <person name="Suen K.M."/>
            <person name="Braukmann F."/>
            <person name="Butler R."/>
            <person name="Bensaddek D."/>
            <person name="Akay A."/>
            <person name="Lin C.C."/>
            <person name="Milonaityte D."/>
            <person name="Doshi N."/>
            <person name="Sapetschnig A."/>
            <person name="Lamond A."/>
            <person name="Ladbury J.E."/>
            <person name="Miska E.A."/>
        </authorList>
    </citation>
    <scope>FUNCTION</scope>
    <scope>INTERACTION WITH EDG-1 AND PRG-1</scope>
    <scope>SUBCELLULAR LOCATION</scope>
    <scope>MUTAGENESIS OF 102-HIS--VAL-619 AND 116-ARG--VAL-619</scope>
</reference>
<evidence type="ECO:0000256" key="1">
    <source>
        <dbReference type="SAM" id="MobiDB-lite"/>
    </source>
</evidence>
<evidence type="ECO:0000269" key="2">
    <source>
    </source>
</evidence>
<evidence type="ECO:0000269" key="3">
    <source>
    </source>
</evidence>
<evidence type="ECO:0000269" key="4">
    <source>
    </source>
</evidence>
<evidence type="ECO:0000269" key="5">
    <source>
    </source>
</evidence>
<evidence type="ECO:0000303" key="6">
    <source>
    </source>
</evidence>
<evidence type="ECO:0000305" key="7"/>
<evidence type="ECO:0000312" key="8">
    <source>
        <dbReference type="Proteomes" id="UP000001940"/>
    </source>
</evidence>
<evidence type="ECO:0000312" key="9">
    <source>
        <dbReference type="WormBase" id="Y65B4BL.2a"/>
    </source>
</evidence>
<evidence type="ECO:0000312" key="10">
    <source>
        <dbReference type="WormBase" id="Y65B4BL.2b"/>
    </source>
</evidence>
<feature type="chain" id="PRO_0000451760" description="P-granule-associated protein deps-1">
    <location>
        <begin position="1"/>
        <end position="619"/>
    </location>
</feature>
<feature type="region of interest" description="Required for prg-1 binding" evidence="5">
    <location>
        <begin position="62"/>
        <end position="101"/>
    </location>
</feature>
<feature type="region of interest" description="Disordered" evidence="1">
    <location>
        <begin position="563"/>
        <end position="619"/>
    </location>
</feature>
<feature type="compositionally biased region" description="Low complexity" evidence="1">
    <location>
        <begin position="563"/>
        <end position="592"/>
    </location>
</feature>
<feature type="compositionally biased region" description="Low complexity" evidence="1">
    <location>
        <begin position="600"/>
        <end position="619"/>
    </location>
</feature>
<feature type="splice variant" id="VSP_060860" description="In isoform b." evidence="7">
    <location>
        <begin position="1"/>
        <end position="45"/>
    </location>
</feature>
<feature type="mutagenesis site" description="In mj605; reduces P-granule localization and is diffusely localized in the cytoplasm. Abolishes prg-1 binding. Does not affect the mRNA or protein levels of prg-1. Defective RNA-mediated gene silencing (RNAi), specifically abolishing piwi-interacting RNA (piRNA) gene silencing." evidence="5">
    <location>
        <begin position="102"/>
        <end position="619"/>
    </location>
</feature>
<feature type="mutagenesis site" description="In bn124; disrupts pgl-1 localization to P-granules. Abolishes piwi-interacting RNA (piRNA) gene silencing. Smaller Z granules, which are liquid-like condensates in the cytoplasm. Abolishes the binding of the epigenetic inheritance factor znfx-1 to RNA." evidence="2 4 5">
    <location>
        <begin position="116"/>
        <end position="619"/>
    </location>
</feature>
<feature type="mutagenesis site" description="In bn128; disrupts pgl-1 localization to P-granules." evidence="2">
    <location>
        <begin position="408"/>
        <end position="619"/>
    </location>
</feature>